<protein>
    <recommendedName>
        <fullName evidence="1">Minor capsid protein L2</fullName>
    </recommendedName>
</protein>
<proteinExistence type="inferred from homology"/>
<name>VL2_CRPVK</name>
<feature type="chain" id="PRO_0000133636" description="Minor capsid protein L2">
    <location>
        <begin position="1"/>
        <end position="492"/>
    </location>
</feature>
<feature type="region of interest" description="Disordered" evidence="2">
    <location>
        <begin position="211"/>
        <end position="230"/>
    </location>
</feature>
<feature type="short sequence motif" description="Nuclear localization signal" evidence="1">
    <location>
        <begin position="2"/>
        <end position="10"/>
    </location>
</feature>
<feature type="short sequence motif" description="Nuclear localization signal" evidence="1">
    <location>
        <begin position="473"/>
        <end position="478"/>
    </location>
</feature>
<feature type="disulfide bond" evidence="1">
    <location>
        <begin position="19"/>
        <end position="25"/>
    </location>
</feature>
<keyword id="KW-0167">Capsid protein</keyword>
<keyword id="KW-1176">Cytoplasmic inwards viral transport</keyword>
<keyword id="KW-1015">Disulfide bond</keyword>
<keyword id="KW-0238">DNA-binding</keyword>
<keyword id="KW-1039">Host endosome</keyword>
<keyword id="KW-1040">Host Golgi apparatus</keyword>
<keyword id="KW-1048">Host nucleus</keyword>
<keyword id="KW-0945">Host-virus interaction</keyword>
<keyword id="KW-0426">Late protein</keyword>
<keyword id="KW-1177">Microtubular inwards viral transport</keyword>
<keyword id="KW-0597">Phosphoprotein</keyword>
<keyword id="KW-1185">Reference proteome</keyword>
<keyword id="KW-1163">Viral penetration into host nucleus</keyword>
<keyword id="KW-0946">Virion</keyword>
<keyword id="KW-1160">Virus entry into host cell</keyword>
<organism>
    <name type="scientific">Cottontail rabbit papillomavirus (strain Kansas)</name>
    <name type="common">CRPV</name>
    <name type="synonym">Papillomavirus sylvilagi</name>
    <dbReference type="NCBI Taxonomy" id="31553"/>
    <lineage>
        <taxon>Viruses</taxon>
        <taxon>Monodnaviria</taxon>
        <taxon>Shotokuvirae</taxon>
        <taxon>Cossaviricota</taxon>
        <taxon>Papovaviricetes</taxon>
        <taxon>Zurhausenvirales</taxon>
        <taxon>Papillomaviridae</taxon>
        <taxon>Firstpapillomavirinae</taxon>
        <taxon>Kappapapillomavirus</taxon>
        <taxon>Kappapapillomavirus 2</taxon>
    </lineage>
</organism>
<evidence type="ECO:0000255" key="1">
    <source>
        <dbReference type="HAMAP-Rule" id="MF_04003"/>
    </source>
</evidence>
<evidence type="ECO:0000256" key="2">
    <source>
        <dbReference type="SAM" id="MobiDB-lite"/>
    </source>
</evidence>
<reference key="1">
    <citation type="journal article" date="1985" name="Proc. Natl. Acad. Sci. U.S.A.">
        <title>Genomic structure of the cottontail rabbit (Shope) papillomavirus.</title>
        <authorList>
            <person name="Giri I."/>
            <person name="Danos O."/>
            <person name="Yaniv M."/>
        </authorList>
    </citation>
    <scope>NUCLEOTIDE SEQUENCE [GENOMIC DNA]</scope>
</reference>
<comment type="function">
    <text evidence="1">Minor protein of the capsid that localizes along the inner surface of the virion, within the central cavities beneath the L1 pentamers. Plays a role in capsid stabilization through interaction with the major capsid protein L1. Once the virion enters the host cell, L2 escorts the genomic DNA into the nucleus by promoting escape from the endosomal compartments and traffic through the host Golgi network. Mechanistically, the C-terminus of L2 possesses a cell-penetrating peptide that protudes from the host endosome, interacts with host cytoplasmic retromer cargo and thereby mediates the capsid delivery to the host trans-Golgi network. Plays a role through its interaction with host dynein in the intracellular microtubule-dependent transport of viral capsid toward the nucleus. Mediates the viral genome import into the nucleus through binding to host importins. Once within the nucleus, L2 localizes viral genomes to host PML bodies in order to activate early gene expression for establishment of infection. Later on, promotes late gene expression by interacting with the viral E2 protein and by inhibiting its transcriptional activation functions. During virion assembly, encapsidates the genome by direct interaction with the viral DNA.</text>
</comment>
<comment type="subunit">
    <text evidence="1">Interacts with major capsid protein L1. Interacts with E2; this interaction inhibits E2 transcriptional activity but not the DNA replication function E2. Interacts with host GADD45GIP1. Interacts with host HSPA8; this interaction is required for L2 nuclear translocation. Interacts with host importins KPNB2 and KPNB3. Forms a complex with importin alpha2-beta1 heterodimers via interaction with the importin alpha2 adapter. Interacts with host DYNLT1; this interaction is essential for virus intracellular transport during entry. Interacts (via C-terminus) with host retromer subunits VPS35 and VPS29.</text>
</comment>
<comment type="subcellular location">
    <subcellularLocation>
        <location evidence="1">Virion</location>
    </subcellularLocation>
    <subcellularLocation>
        <location evidence="1">Host nucleus</location>
    </subcellularLocation>
    <subcellularLocation>
        <location evidence="1">Host early endosome</location>
    </subcellularLocation>
    <subcellularLocation>
        <location evidence="1">Host Golgi apparatus</location>
    </subcellularLocation>
</comment>
<comment type="PTM">
    <text evidence="1">Highly phosphorylated.</text>
</comment>
<comment type="similarity">
    <text evidence="1">Belongs to the papillomaviridae L2 protein family.</text>
</comment>
<organismHost>
    <name type="scientific">Sylvilagus floridanus</name>
    <name type="common">Cottontail rabbit</name>
    <dbReference type="NCBI Taxonomy" id="9988"/>
</organismHost>
<accession>P03108</accession>
<gene>
    <name evidence="1" type="primary">L2</name>
</gene>
<sequence>MVARSRKRRAAPQDIYPTCKIAGNCPADIQNKFENKTIADKILQYGSLGVFFGGLGISSAGGSGGRLGYTPLSGGGGRVIAAAPVRPPITTESVGPLDIVPEVADPGGPTLVSLHELPAETPYVSSTNVTGDGAAEPLPAGHGGSQISDVTSGTSGTVSRTHINNPVFEAPMTGDQDVSDVHVFAHSESSITINQTENTGGELIEMVPLRHPPRSEGDFRETSFSTSTPIPDRSALRSINVASRRYQQVQVENPAFLNRPRELVQFENTFDNPAFVDDEQLSLLFEQDLDTVVATPDPAFQDVVRLSRPSFTQSRAGRVRVSRLGRTLTMQTRSGKAFGPAKHFYYELSSIAEGPEPDILIPESEQETSFTDATSKDTQQEAEVYADGSTLETDTSADENLTLVFSDRGRGQGSHVPIPGKSTIGGPVNIGDSKYYTLNPGETTSFEADVISPVFIFEGNADGTYYLEEPLRKKRRKSIFLLADGSVAVYAE</sequence>
<dbReference type="EMBL" id="K02708">
    <property type="status" value="NOT_ANNOTATED_CDS"/>
    <property type="molecule type" value="Genomic_DNA"/>
</dbReference>
<dbReference type="PIR" id="A03652">
    <property type="entry name" value="P2WLRB"/>
</dbReference>
<dbReference type="Proteomes" id="UP000008787">
    <property type="component" value="Segment"/>
</dbReference>
<dbReference type="GO" id="GO:0043657">
    <property type="term" value="C:host cell"/>
    <property type="evidence" value="ECO:0007669"/>
    <property type="project" value="GOC"/>
</dbReference>
<dbReference type="GO" id="GO:0044174">
    <property type="term" value="C:host cell endosome"/>
    <property type="evidence" value="ECO:0007669"/>
    <property type="project" value="UniProtKB-KW"/>
</dbReference>
<dbReference type="GO" id="GO:0044177">
    <property type="term" value="C:host cell Golgi apparatus"/>
    <property type="evidence" value="ECO:0007669"/>
    <property type="project" value="UniProtKB-SubCell"/>
</dbReference>
<dbReference type="GO" id="GO:0042025">
    <property type="term" value="C:host cell nucleus"/>
    <property type="evidence" value="ECO:0007669"/>
    <property type="project" value="UniProtKB-SubCell"/>
</dbReference>
<dbReference type="GO" id="GO:0019028">
    <property type="term" value="C:viral capsid"/>
    <property type="evidence" value="ECO:0007669"/>
    <property type="project" value="UniProtKB-UniRule"/>
</dbReference>
<dbReference type="GO" id="GO:0003677">
    <property type="term" value="F:DNA binding"/>
    <property type="evidence" value="ECO:0007669"/>
    <property type="project" value="UniProtKB-UniRule"/>
</dbReference>
<dbReference type="GO" id="GO:0005198">
    <property type="term" value="F:structural molecule activity"/>
    <property type="evidence" value="ECO:0007669"/>
    <property type="project" value="UniProtKB-UniRule"/>
</dbReference>
<dbReference type="GO" id="GO:0075521">
    <property type="term" value="P:microtubule-dependent intracellular transport of viral material towards nucleus"/>
    <property type="evidence" value="ECO:0007669"/>
    <property type="project" value="UniProtKB-UniRule"/>
</dbReference>
<dbReference type="GO" id="GO:0046718">
    <property type="term" value="P:symbiont entry into host cell"/>
    <property type="evidence" value="ECO:0007669"/>
    <property type="project" value="UniProtKB-KW"/>
</dbReference>
<dbReference type="GO" id="GO:0075732">
    <property type="term" value="P:viral penetration into host nucleus"/>
    <property type="evidence" value="ECO:0007669"/>
    <property type="project" value="UniProtKB-KW"/>
</dbReference>
<dbReference type="HAMAP" id="MF_04003">
    <property type="entry name" value="PPV_L2"/>
    <property type="match status" value="1"/>
</dbReference>
<dbReference type="InterPro" id="IPR000784">
    <property type="entry name" value="Late_L2"/>
</dbReference>
<dbReference type="Pfam" id="PF00513">
    <property type="entry name" value="Late_protein_L2"/>
    <property type="match status" value="1"/>
</dbReference>